<keyword id="KW-0121">Carboxypeptidase</keyword>
<keyword id="KW-0165">Cleavage on pair of basic residues</keyword>
<keyword id="KW-1015">Disulfide bond</keyword>
<keyword id="KW-0378">Hydrolase</keyword>
<keyword id="KW-0479">Metal-binding</keyword>
<keyword id="KW-0482">Metalloprotease</keyword>
<keyword id="KW-0645">Protease</keyword>
<keyword id="KW-1185">Reference proteome</keyword>
<keyword id="KW-0964">Secreted</keyword>
<keyword id="KW-0732">Signal</keyword>
<keyword id="KW-0862">Zinc</keyword>
<keyword id="KW-0865">Zymogen</keyword>
<feature type="signal peptide" evidence="4">
    <location>
        <begin position="1"/>
        <end position="33"/>
    </location>
</feature>
<feature type="propeptide" id="PRO_0000280811" description="Activation peptide" evidence="1">
    <location>
        <begin position="34"/>
        <end position="126"/>
    </location>
</feature>
<feature type="chain" id="PRO_0000280812" description="Carboxypeptidase A5">
    <location>
        <begin position="127"/>
        <end position="436"/>
    </location>
</feature>
<feature type="domain" description="Peptidase M14" evidence="5">
    <location>
        <begin position="138"/>
        <end position="431"/>
    </location>
</feature>
<feature type="active site" description="Proton donor/acceptor" evidence="5">
    <location>
        <position position="397"/>
    </location>
</feature>
<feature type="binding site" evidence="2">
    <location>
        <begin position="196"/>
        <end position="199"/>
    </location>
    <ligand>
        <name>substrate</name>
    </ligand>
</feature>
<feature type="binding site" evidence="5">
    <location>
        <position position="196"/>
    </location>
    <ligand>
        <name>Zn(2+)</name>
        <dbReference type="ChEBI" id="CHEBI:29105"/>
        <note>catalytic</note>
    </ligand>
</feature>
<feature type="binding site" evidence="5">
    <location>
        <position position="199"/>
    </location>
    <ligand>
        <name>Zn(2+)</name>
        <dbReference type="ChEBI" id="CHEBI:29105"/>
        <note>catalytic</note>
    </ligand>
</feature>
<feature type="binding site" evidence="2">
    <location>
        <position position="254"/>
    </location>
    <ligand>
        <name>substrate</name>
    </ligand>
</feature>
<feature type="binding site" evidence="2">
    <location>
        <begin position="271"/>
        <end position="272"/>
    </location>
    <ligand>
        <name>substrate</name>
    </ligand>
</feature>
<feature type="binding site" evidence="5">
    <location>
        <position position="323"/>
    </location>
    <ligand>
        <name>Zn(2+)</name>
        <dbReference type="ChEBI" id="CHEBI:29105"/>
        <note>catalytic</note>
    </ligand>
</feature>
<feature type="binding site" evidence="2">
    <location>
        <begin position="324"/>
        <end position="325"/>
    </location>
    <ligand>
        <name>substrate</name>
    </ligand>
</feature>
<feature type="binding site" evidence="2">
    <location>
        <position position="375"/>
    </location>
    <ligand>
        <name>substrate</name>
    </ligand>
</feature>
<feature type="disulfide bond" evidence="3">
    <location>
        <begin position="265"/>
        <end position="288"/>
    </location>
</feature>
<comment type="cofactor">
    <cofactor evidence="2">
        <name>Zn(2+)</name>
        <dbReference type="ChEBI" id="CHEBI:29105"/>
    </cofactor>
    <text evidence="2">Binds 1 zinc ion per subunit.</text>
</comment>
<comment type="subcellular location">
    <subcellularLocation>
        <location evidence="1">Secreted</location>
    </subcellularLocation>
</comment>
<comment type="similarity">
    <text evidence="6">Belongs to the peptidase M14 family.</text>
</comment>
<evidence type="ECO:0000250" key="1"/>
<evidence type="ECO:0000250" key="2">
    <source>
        <dbReference type="UniProtKB" id="P00730"/>
    </source>
</evidence>
<evidence type="ECO:0000250" key="3">
    <source>
        <dbReference type="UniProtKB" id="Q96IY4"/>
    </source>
</evidence>
<evidence type="ECO:0000255" key="4"/>
<evidence type="ECO:0000255" key="5">
    <source>
        <dbReference type="PROSITE-ProRule" id="PRU01379"/>
    </source>
</evidence>
<evidence type="ECO:0000305" key="6"/>
<proteinExistence type="evidence at transcript level"/>
<organism>
    <name type="scientific">Macaca fascicularis</name>
    <name type="common">Crab-eating macaque</name>
    <name type="synonym">Cynomolgus monkey</name>
    <dbReference type="NCBI Taxonomy" id="9541"/>
    <lineage>
        <taxon>Eukaryota</taxon>
        <taxon>Metazoa</taxon>
        <taxon>Chordata</taxon>
        <taxon>Craniata</taxon>
        <taxon>Vertebrata</taxon>
        <taxon>Euteleostomi</taxon>
        <taxon>Mammalia</taxon>
        <taxon>Eutheria</taxon>
        <taxon>Euarchontoglires</taxon>
        <taxon>Primates</taxon>
        <taxon>Haplorrhini</taxon>
        <taxon>Catarrhini</taxon>
        <taxon>Cercopithecidae</taxon>
        <taxon>Cercopithecinae</taxon>
        <taxon>Macaca</taxon>
    </lineage>
</organism>
<name>CBPA5_MACFA</name>
<sequence>MQGTPAGGTSPGPSPMDRQTLLVFSLILAAALGQMNFTGDQVLRVLAKDEKQLSLLRDLEGLKPQKVDFWRGPARPSLPVDMRVPFSELKYIKAYLESHGLAYSIMIKDIQVLLDEEREAMAKSRRLERSTSSFSYSSYHTLEEISSWIDNFVTEHSDIVSKIQIGNSFENRSILVLKFSTGGSRHPAIWIDTGIHSREWITHATGIWTANKIVSDYGKDRVLTDILKAMDIFIELVTNPDGFAFTHSMNRLWRKNKSIRPGIFCIGVDLNRNWKSGFGGNGSNSNPCSETYHGPSPQSEPEVAAIVNFITAHGNFKALISIHSYSQMLMYPYGRSLEPVSNQRELYDLAKDAVEALYKVHGIEYFFGSISTTLYVASGITVDWAYDSGIKYAFSFELRDTGRYGFLLPATQIIPTAQETWMALRTIMEHTLNHPY</sequence>
<reference key="1">
    <citation type="submission" date="2005-06" db="EMBL/GenBank/DDBJ databases">
        <title>DNA sequences of macaque genes expressed in brain or testis and its evolutionary implications.</title>
        <authorList>
            <consortium name="International consortium for macaque cDNA sequencing and analysis"/>
        </authorList>
    </citation>
    <scope>NUCLEOTIDE SEQUENCE [LARGE SCALE MRNA]</scope>
    <source>
        <tissue>Testis</tissue>
    </source>
</reference>
<protein>
    <recommendedName>
        <fullName>Carboxypeptidase A5</fullName>
        <ecNumber>3.4.17.-</ecNumber>
    </recommendedName>
</protein>
<accession>Q4R7R2</accession>
<dbReference type="EC" id="3.4.17.-"/>
<dbReference type="EMBL" id="AB168753">
    <property type="protein sequence ID" value="BAE00860.1"/>
    <property type="molecule type" value="mRNA"/>
</dbReference>
<dbReference type="RefSeq" id="NP_001272224.1">
    <property type="nucleotide sequence ID" value="NM_001285295.1"/>
</dbReference>
<dbReference type="SMR" id="Q4R7R2"/>
<dbReference type="STRING" id="9541.ENSMFAP00000027244"/>
<dbReference type="MEROPS" id="M14.020"/>
<dbReference type="eggNOG" id="KOG2650">
    <property type="taxonomic scope" value="Eukaryota"/>
</dbReference>
<dbReference type="Proteomes" id="UP000233100">
    <property type="component" value="Unplaced"/>
</dbReference>
<dbReference type="GO" id="GO:0005615">
    <property type="term" value="C:extracellular space"/>
    <property type="evidence" value="ECO:0007669"/>
    <property type="project" value="TreeGrafter"/>
</dbReference>
<dbReference type="GO" id="GO:0004181">
    <property type="term" value="F:metallocarboxypeptidase activity"/>
    <property type="evidence" value="ECO:0007669"/>
    <property type="project" value="InterPro"/>
</dbReference>
<dbReference type="GO" id="GO:0008270">
    <property type="term" value="F:zinc ion binding"/>
    <property type="evidence" value="ECO:0007669"/>
    <property type="project" value="InterPro"/>
</dbReference>
<dbReference type="GO" id="GO:0006508">
    <property type="term" value="P:proteolysis"/>
    <property type="evidence" value="ECO:0007669"/>
    <property type="project" value="UniProtKB-KW"/>
</dbReference>
<dbReference type="CDD" id="cd03870">
    <property type="entry name" value="M14_CPA"/>
    <property type="match status" value="1"/>
</dbReference>
<dbReference type="FunFam" id="3.40.630.10:FF:000132">
    <property type="entry name" value="Carboxypeptidase A1"/>
    <property type="match status" value="1"/>
</dbReference>
<dbReference type="FunFam" id="3.30.70.340:FF:000001">
    <property type="entry name" value="Carboxypeptidase A5"/>
    <property type="match status" value="1"/>
</dbReference>
<dbReference type="Gene3D" id="3.30.70.340">
    <property type="entry name" value="Metallocarboxypeptidase-like"/>
    <property type="match status" value="1"/>
</dbReference>
<dbReference type="Gene3D" id="3.40.630.10">
    <property type="entry name" value="Zn peptidases"/>
    <property type="match status" value="1"/>
</dbReference>
<dbReference type="InterPro" id="IPR034248">
    <property type="entry name" value="CPA_M14_CPD"/>
</dbReference>
<dbReference type="InterPro" id="IPR036990">
    <property type="entry name" value="M14A-like_propep"/>
</dbReference>
<dbReference type="InterPro" id="IPR003146">
    <property type="entry name" value="M14A_act_pep"/>
</dbReference>
<dbReference type="InterPro" id="IPR000834">
    <property type="entry name" value="Peptidase_M14"/>
</dbReference>
<dbReference type="PANTHER" id="PTHR11705:SF16">
    <property type="entry name" value="CARBOXYPEPTIDASE A5"/>
    <property type="match status" value="1"/>
</dbReference>
<dbReference type="PANTHER" id="PTHR11705">
    <property type="entry name" value="PROTEASE FAMILY M14 CARBOXYPEPTIDASE A,B"/>
    <property type="match status" value="1"/>
</dbReference>
<dbReference type="Pfam" id="PF00246">
    <property type="entry name" value="Peptidase_M14"/>
    <property type="match status" value="1"/>
</dbReference>
<dbReference type="Pfam" id="PF02244">
    <property type="entry name" value="Propep_M14"/>
    <property type="match status" value="1"/>
</dbReference>
<dbReference type="PRINTS" id="PR00765">
    <property type="entry name" value="CRBOXYPTASEA"/>
</dbReference>
<dbReference type="SMART" id="SM00631">
    <property type="entry name" value="Zn_pept"/>
    <property type="match status" value="1"/>
</dbReference>
<dbReference type="SUPFAM" id="SSF54897">
    <property type="entry name" value="Protease propeptides/inhibitors"/>
    <property type="match status" value="1"/>
</dbReference>
<dbReference type="SUPFAM" id="SSF53187">
    <property type="entry name" value="Zn-dependent exopeptidases"/>
    <property type="match status" value="1"/>
</dbReference>
<dbReference type="PROSITE" id="PS00132">
    <property type="entry name" value="CARBOXYPEPT_ZN_1"/>
    <property type="match status" value="1"/>
</dbReference>
<dbReference type="PROSITE" id="PS00133">
    <property type="entry name" value="CARBOXYPEPT_ZN_2"/>
    <property type="match status" value="1"/>
</dbReference>
<dbReference type="PROSITE" id="PS52035">
    <property type="entry name" value="PEPTIDASE_M14"/>
    <property type="match status" value="1"/>
</dbReference>
<gene>
    <name type="primary">CPA5</name>
    <name type="ORF">QtsA-14584</name>
</gene>